<evidence type="ECO:0000255" key="1">
    <source>
        <dbReference type="PROSITE-ProRule" id="PRU00145"/>
    </source>
</evidence>
<evidence type="ECO:0000255" key="2">
    <source>
        <dbReference type="PROSITE-ProRule" id="PRU00166"/>
    </source>
</evidence>
<evidence type="ECO:0000256" key="3">
    <source>
        <dbReference type="SAM" id="MobiDB-lite"/>
    </source>
</evidence>
<evidence type="ECO:0000269" key="4">
    <source>
    </source>
</evidence>
<evidence type="ECO:0000269" key="5">
    <source>
    </source>
</evidence>
<evidence type="ECO:0000269" key="6">
    <source>
    </source>
</evidence>
<evidence type="ECO:0000269" key="7">
    <source>
    </source>
</evidence>
<evidence type="ECO:0000269" key="8">
    <source>
    </source>
</evidence>
<evidence type="ECO:0000303" key="9">
    <source>
    </source>
</evidence>
<evidence type="ECO:0000303" key="10">
    <source>
    </source>
</evidence>
<evidence type="ECO:0000305" key="11"/>
<evidence type="ECO:0007744" key="12">
    <source>
    </source>
</evidence>
<evidence type="ECO:0007744" key="13">
    <source>
    </source>
</evidence>
<evidence type="ECO:0007744" key="14">
    <source>
    </source>
</evidence>
<evidence type="ECO:0007744" key="15">
    <source>
    </source>
</evidence>
<evidence type="ECO:0007744" key="16">
    <source>
    </source>
</evidence>
<evidence type="ECO:0007744" key="17">
    <source>
    </source>
</evidence>
<evidence type="ECO:0007829" key="18">
    <source>
        <dbReference type="PDB" id="4GMV"/>
    </source>
</evidence>
<evidence type="ECO:0007829" key="19">
    <source>
        <dbReference type="PDB" id="4GN1"/>
    </source>
</evidence>
<gene>
    <name type="primary">RAPH1</name>
    <name type="synonym">ALS2CR18</name>
    <name type="synonym">ALS2CR9</name>
    <name type="synonym">KIAA1681</name>
    <name type="synonym">LPD</name>
    <name type="synonym">PREL2</name>
    <name type="synonym">RMO1</name>
</gene>
<comment type="function">
    <text>Mediator of localized membrane signals. Implicated in the regulation of lamellipodial dynamics. Negatively regulates cell adhesion.</text>
</comment>
<comment type="subunit">
    <text evidence="4 7">Interacts with EVL and VASP and targets them to the leading edge (PubMed:15469845). Interacts (via Ras associating and PH domains) with RAC1 (PubMed:18499456).</text>
</comment>
<comment type="interaction">
    <interactant intactId="EBI-3940924">
        <id>Q70E73</id>
    </interactant>
    <interactant intactId="EBI-297353">
        <id>P00533</id>
        <label>EGFR</label>
    </interactant>
    <organismsDiffer>false</organismsDiffer>
    <experiments>2</experiments>
</comment>
<comment type="interaction">
    <interactant intactId="EBI-3940924">
        <id>Q70E73</id>
    </interactant>
    <interactant intactId="EBI-77938">
        <id>Q99962</id>
        <label>SH3GL2</label>
    </interactant>
    <organismsDiffer>false</organismsDiffer>
    <experiments>5</experiments>
</comment>
<comment type="interaction">
    <interactant intactId="EBI-3940924">
        <id>Q70E73</id>
    </interactant>
    <interactant intactId="EBI-473910">
        <id>Q99963</id>
        <label>SH3GL3</label>
    </interactant>
    <organismsDiffer>false</organismsDiffer>
    <experiments>4</experiments>
</comment>
<comment type="interaction">
    <interactant intactId="EBI-3940924">
        <id>Q70E73</id>
    </interactant>
    <interactant intactId="EBI-1149235">
        <id>O35964</id>
        <label>Sh3gl1</label>
    </interactant>
    <organismsDiffer>true</organismsDiffer>
    <experiments>13</experiments>
</comment>
<comment type="subcellular location">
    <subcellularLocation>
        <location evidence="4">Cell membrane</location>
        <topology evidence="4">Peripheral membrane protein</topology>
        <orientation evidence="4">Cytoplasmic side</orientation>
    </subcellularLocation>
    <subcellularLocation>
        <location evidence="4">Cell projection</location>
        <location evidence="4">Lamellipodium</location>
    </subcellularLocation>
    <subcellularLocation>
        <location evidence="4">Cell projection</location>
        <location evidence="4">Filopodium</location>
    </subcellularLocation>
    <subcellularLocation>
        <location evidence="4">Cytoplasm</location>
        <location evidence="4">Cytoskeleton</location>
    </subcellularLocation>
    <text>Recruited to the membrane, via the PH domain, by the phosphoinositide, PI(3,4)P2. Colocalizes with ENAH/VASP at the tips of lamellipodia and filopodia. Also colocalizes with the pathogens, Vaccinia and Enteropathogenic E.coli (EPEC) at the interface between the pathogen and their actin.</text>
</comment>
<comment type="alternative products">
    <event type="alternative splicing"/>
    <isoform>
        <id>Q70E73-10</id>
        <name>RMO1-RAPH1</name>
        <name>Lamellipodin</name>
        <name>RAPH1</name>
        <sequence type="displayed"/>
    </isoform>
    <isoform>
        <id>Q70E73-2</id>
        <name>RMO1</name>
        <sequence type="described" ref="VSP_035788 VSP_035789"/>
    </isoform>
    <isoform>
        <id>Q70E73-3</id>
        <name>RMO1a</name>
        <sequence type="described" ref="VSP_035784 VSP_035788 VSP_035789"/>
    </isoform>
    <isoform>
        <id>Q70E73-4</id>
        <name>RMO1b</name>
        <sequence type="described" ref="VSP_035786 VSP_035788 VSP_035789"/>
    </isoform>
    <isoform>
        <id>Q70E73-5</id>
        <name>RMO1c</name>
        <sequence type="described" ref="VSP_035787"/>
    </isoform>
    <isoform>
        <id>Q70E73-6</id>
        <name>RMO1ab</name>
        <name>Lamellipodin-S</name>
        <name>Lpd-S</name>
        <sequence type="described" ref="VSP_035785 VSP_035788 VSP_035789"/>
    </isoform>
    <isoform>
        <id>Q70E73-7</id>
        <name>RMO1ac</name>
        <sequence type="described" ref="VSP_035784 VSP_035787"/>
    </isoform>
    <isoform>
        <id>Q70E73-8</id>
        <name>RMO1bc</name>
        <sequence type="described" ref="VSP_035786 VSP_035787"/>
    </isoform>
    <isoform>
        <id>Q70E73-9</id>
        <name>RMO1abc</name>
        <sequence type="described" ref="VSP_035785 VSP_035787"/>
    </isoform>
</comment>
<comment type="tissue specificity">
    <text evidence="4 5">Isoform RMO1-RAPH1 is ubiquitously expressed with highest levels in brain, heart, ovary and developing embryo. Isoform RMO1 is widely expressed with highest levels in liver. Low expression in B-cells.</text>
</comment>
<comment type="induction">
    <text>Reduced expression in metastatic osteosarcomas compared to primary osteosarcoma tumors. Down-regulated in both breast (43% of tissue samples) and ovarian (25% of tissue samples) cancers.</text>
</comment>
<comment type="similarity">
    <text evidence="11">Belongs to the MRL family.</text>
</comment>
<sequence>MEQLSDEEIDHGAEEDSDKEDQDLDKMFGAWLGELDKLTQSLDSDKPMEPVKRSPLRQETNMANFSYRFSIYNLNEALNQGETVDLDALMADLCSIEQELSSIGSGNSKRQITETKATQKLPVSRHTLKHGTLKGLSSSSNRIAKPSHASYSLDDVTAQLEQASLSMDEAAQQSVLEDTKPLVTNQHRRTASAGTVSDAEVHSISNSSHSSITSAASSMDSLDIDKVTRPQELDLTHQGQPITEEEQAAKLKAEKIRVALEKIKEAQVKKLVIRVHMSDDSSKTMMVDERQTVRQVLDNLMDKSHCGYSLDWSLVETVSELQMERIFEDHENLVENLLNWTRDSQNKLIFMERIEKYALFKNPQNYLLGKKETAEMADRNKEVLLEECFCGSSVTVPEIEGVLWLKDDGKKSWKKRYFLLRASGIYYVPKGKAKVSRDLVCFLQLDHVNVYYGQDYRNKYKAPTDYCLVLKHPQIQKKSQYIKYLCCDDVRTLHQWVNGIRIAKYGKQLYMNYQEALKRTESAYDWTSLSSSSIKSGSSSSSIPESQSNHSNQSDSGVSDTQPAGHVRSQSIVSSVFSEAWKRGTQLEESSKARMESMNRPYTSLVPPLSPQPKIVTPYTASQPSPPLPPPPPPPPPPPPPPPPPPPPLPSQSAPSAGSAAPMFVKYSTITRLQNASQHSGALFKPPTPPVMQSQSVKPQILVPPNGVVPPPPPPPPPPTPGSAMAQLKPAPCAPSLPQFSAPPPPLKIHQVQHITQVAPPTPPPPPPIPAPLPPQAPPKPLVTIPAPTSTKTVAPVVTQAAPPTPTPPVPPAKKQPAFPASYIPPSPPTPPVPVPPPTLPKQQSFCAKPPPSPLSPVPSVVKQIASQFPPPPTPPAMESQPLKPVPANVAPQSPPAVKAKPKWQPSSIPVPSPDFPPPPPESSLVFPPPPPSPVPAPPPPPPPTASPTPDKSGSPGKKTSKTSSPGGKKPPPTPQRNSSIKSSSGAEHPEPKRPSVDSLVSKFTPPAESGSPSKETLPPPAAPPKPGKLNLSGVNLPGVLQQGCVSAKAPVLSGRGKDSVVEFPSPPSDSDFPPPPPETELPLPPIEIPAVFSGNTSPKVAVVNPQPQQWSKMSVKKAPPPTRPKRNDSTRLTQAEISEQPTMATVVPQVPTSPKSSLSVQPGFLADLNRTLQRKSITRHGSLSSRMSRAEPTATMDDMALPPPPPELLSDQQKAGYGGSHISGYATLRRGPPPAPPKRDQNTKLSRDW</sequence>
<organism>
    <name type="scientific">Homo sapiens</name>
    <name type="common">Human</name>
    <dbReference type="NCBI Taxonomy" id="9606"/>
    <lineage>
        <taxon>Eukaryota</taxon>
        <taxon>Metazoa</taxon>
        <taxon>Chordata</taxon>
        <taxon>Craniata</taxon>
        <taxon>Vertebrata</taxon>
        <taxon>Euteleostomi</taxon>
        <taxon>Mammalia</taxon>
        <taxon>Eutheria</taxon>
        <taxon>Euarchontoglires</taxon>
        <taxon>Primates</taxon>
        <taxon>Haplorrhini</taxon>
        <taxon>Catarrhini</taxon>
        <taxon>Hominidae</taxon>
        <taxon>Homo</taxon>
    </lineage>
</organism>
<feature type="chain" id="PRO_0000181352" description="Ras-associated and pleckstrin homology domains-containing protein 1">
    <location>
        <begin position="1"/>
        <end position="1250"/>
    </location>
</feature>
<feature type="domain" description="Ras-associating" evidence="2">
    <location>
        <begin position="269"/>
        <end position="355"/>
    </location>
</feature>
<feature type="domain" description="PH" evidence="1">
    <location>
        <begin position="396"/>
        <end position="505"/>
    </location>
</feature>
<feature type="region of interest" description="Disordered" evidence="3">
    <location>
        <begin position="1"/>
        <end position="26"/>
    </location>
</feature>
<feature type="region of interest" description="Disordered" evidence="3">
    <location>
        <begin position="179"/>
        <end position="217"/>
    </location>
</feature>
<feature type="region of interest" description="Disordered" evidence="3">
    <location>
        <begin position="535"/>
        <end position="570"/>
    </location>
</feature>
<feature type="region of interest" description="Disordered" evidence="3">
    <location>
        <begin position="588"/>
        <end position="663"/>
    </location>
</feature>
<feature type="region of interest" description="Disordered" evidence="3">
    <location>
        <begin position="675"/>
        <end position="1036"/>
    </location>
</feature>
<feature type="region of interest" description="Disordered" evidence="3">
    <location>
        <begin position="1050"/>
        <end position="1162"/>
    </location>
</feature>
<feature type="region of interest" description="Disordered" evidence="3">
    <location>
        <begin position="1176"/>
        <end position="1250"/>
    </location>
</feature>
<feature type="compositionally biased region" description="Acidic residues" evidence="3">
    <location>
        <begin position="1"/>
        <end position="23"/>
    </location>
</feature>
<feature type="compositionally biased region" description="Low complexity" evidence="3">
    <location>
        <begin position="202"/>
        <end position="217"/>
    </location>
</feature>
<feature type="compositionally biased region" description="Low complexity" evidence="3">
    <location>
        <begin position="535"/>
        <end position="551"/>
    </location>
</feature>
<feature type="compositionally biased region" description="Polar residues" evidence="3">
    <location>
        <begin position="552"/>
        <end position="570"/>
    </location>
</feature>
<feature type="compositionally biased region" description="Basic and acidic residues" evidence="3">
    <location>
        <begin position="588"/>
        <end position="597"/>
    </location>
</feature>
<feature type="compositionally biased region" description="Pro residues" evidence="3">
    <location>
        <begin position="624"/>
        <end position="650"/>
    </location>
</feature>
<feature type="compositionally biased region" description="Low complexity" evidence="3">
    <location>
        <begin position="651"/>
        <end position="662"/>
    </location>
</feature>
<feature type="compositionally biased region" description="Pro residues" evidence="3">
    <location>
        <begin position="707"/>
        <end position="721"/>
    </location>
</feature>
<feature type="compositionally biased region" description="Pro residues" evidence="3">
    <location>
        <begin position="760"/>
        <end position="781"/>
    </location>
</feature>
<feature type="compositionally biased region" description="Low complexity" evidence="3">
    <location>
        <begin position="791"/>
        <end position="802"/>
    </location>
</feature>
<feature type="compositionally biased region" description="Pro residues" evidence="3">
    <location>
        <begin position="803"/>
        <end position="814"/>
    </location>
</feature>
<feature type="compositionally biased region" description="Pro residues" evidence="3">
    <location>
        <begin position="823"/>
        <end position="840"/>
    </location>
</feature>
<feature type="compositionally biased region" description="Pro residues" evidence="3">
    <location>
        <begin position="909"/>
        <end position="947"/>
    </location>
</feature>
<feature type="compositionally biased region" description="Low complexity" evidence="3">
    <location>
        <begin position="948"/>
        <end position="968"/>
    </location>
</feature>
<feature type="compositionally biased region" description="Polar residues" evidence="3">
    <location>
        <begin position="976"/>
        <end position="986"/>
    </location>
</feature>
<feature type="compositionally biased region" description="Pro residues" evidence="3">
    <location>
        <begin position="1018"/>
        <end position="1027"/>
    </location>
</feature>
<feature type="compositionally biased region" description="Pro residues" evidence="3">
    <location>
        <begin position="1065"/>
        <end position="1088"/>
    </location>
</feature>
<feature type="compositionally biased region" description="Polar residues" evidence="3">
    <location>
        <begin position="1131"/>
        <end position="1144"/>
    </location>
</feature>
<feature type="compositionally biased region" description="Polar residues" evidence="3">
    <location>
        <begin position="1151"/>
        <end position="1161"/>
    </location>
</feature>
<feature type="compositionally biased region" description="Basic and acidic residues" evidence="3">
    <location>
        <begin position="1238"/>
        <end position="1250"/>
    </location>
</feature>
<feature type="modified residue" description="N-acetylmethionine" evidence="13 14 15">
    <location>
        <position position="1"/>
    </location>
</feature>
<feature type="modified residue" description="Phosphoserine" evidence="14 15">
    <location>
        <position position="5"/>
    </location>
</feature>
<feature type="modified residue" description="Phosphoserine" evidence="14 15 17">
    <location>
        <position position="17"/>
    </location>
</feature>
<feature type="modified residue" description="Phosphoserine" evidence="12 16">
    <location>
        <position position="54"/>
    </location>
</feature>
<feature type="modified residue" description="Phosphoserine" evidence="17">
    <location>
        <position position="150"/>
    </location>
</feature>
<feature type="modified residue" description="Phosphoserine" evidence="17">
    <location>
        <position position="192"/>
    </location>
</feature>
<feature type="modified residue" description="Phosphoserine" evidence="17">
    <location>
        <position position="203"/>
    </location>
</feature>
<feature type="modified residue" description="Phosphoserine" evidence="17">
    <location>
        <position position="205"/>
    </location>
</feature>
<feature type="modified residue" description="Phosphotyrosine; by ABL1" evidence="8">
    <location>
        <position position="426"/>
    </location>
</feature>
<feature type="modified residue" description="Phosphotyrosine; by ABL1" evidence="8">
    <location>
        <position position="456"/>
    </location>
</feature>
<feature type="modified residue" description="Phosphoserine" evidence="12">
    <location>
        <position position="610"/>
    </location>
</feature>
<feature type="modified residue" description="Phosphoserine" evidence="12 14">
    <location>
        <position position="827"/>
    </location>
</feature>
<feature type="modified residue" description="Phosphothreonine" evidence="12 14">
    <location>
        <position position="830"/>
    </location>
</feature>
<feature type="modified residue" description="Phosphoserine" evidence="17">
    <location>
        <position position="845"/>
    </location>
</feature>
<feature type="modified residue" description="Phosphoserine" evidence="12">
    <location>
        <position position="853"/>
    </location>
</feature>
<feature type="modified residue" description="Phosphoserine" evidence="12 14 17">
    <location>
        <position position="894"/>
    </location>
</feature>
<feature type="modified residue" description="Phosphoserine" evidence="12">
    <location>
        <position position="965"/>
    </location>
</feature>
<feature type="modified residue" description="Phosphothreonine" evidence="12">
    <location>
        <position position="974"/>
    </location>
</feature>
<feature type="modified residue" description="Phosphoserine" evidence="17">
    <location>
        <position position="996"/>
    </location>
</feature>
<feature type="modified residue" description="Phosphoserine" evidence="16">
    <location>
        <position position="1012"/>
    </location>
</feature>
<feature type="modified residue" description="Phosphoserine" evidence="17">
    <location>
        <position position="1183"/>
    </location>
</feature>
<feature type="modified residue" description="Phosphotyrosine; by ABL1" evidence="8">
    <location>
        <position position="1226"/>
    </location>
</feature>
<feature type="splice variant" id="VSP_035784" description="In isoform RMO1a and isoform RMO1ac." evidence="11">
    <original>E</original>
    <variation>EHAISLRCSSKQAKRHIDFTEEQAELTP</variation>
    <location>
        <position position="244"/>
    </location>
</feature>
<feature type="splice variant" id="VSP_035785" description="In isoform RMO1ab and isoform RMO1abc." evidence="9 10">
    <original>E</original>
    <variation>EHAISLRCSSKQAKRHIDFTEEQAELTPHSYLDRETSLLLRNIAGKPSHLLTK</variation>
    <location>
        <position position="244"/>
    </location>
</feature>
<feature type="splice variant" id="VSP_035786" description="In isoform RMO1b and isoform RMO1bc." evidence="11">
    <original>E</original>
    <variation>EHSYLDRETSLLLRNIAGKPSHLLTK</variation>
    <location>
        <position position="244"/>
    </location>
</feature>
<feature type="splice variant" id="VSP_035787" description="In isoform RMO1c, isoform RMO1ac, isoform RMO1bc and isoform RMO1abc." evidence="10">
    <location>
        <begin position="593"/>
        <end position="1250"/>
    </location>
</feature>
<feature type="splice variant" id="VSP_035788" description="In isoform RMO1, isoform RMO1a, isoform RMO1b and isoform RMO1ab." evidence="9 10">
    <original>ARMES</original>
    <variation>VTASF</variation>
    <location>
        <begin position="593"/>
        <end position="597"/>
    </location>
</feature>
<feature type="splice variant" id="VSP_035789" description="In isoform RMO1, isoform RMO1a, isoform RMO1b and isoform RMO1ab." evidence="9 10">
    <location>
        <begin position="598"/>
        <end position="1250"/>
    </location>
</feature>
<feature type="sequence variant" id="VAR_036009" description="In a breast cancer sample; somatic mutation." evidence="6">
    <original>A</original>
    <variation>S</variation>
    <location>
        <position position="891"/>
    </location>
</feature>
<feature type="sequence variant" id="VAR_036010" description="In a breast cancer sample; somatic mutation; dbSNP:rs774304253." evidence="6">
    <original>T</original>
    <variation>A</variation>
    <location>
        <position position="1228"/>
    </location>
</feature>
<feature type="sequence conflict" description="In Ref. 2; AAS82582, 4; CAE48361 and 6; BAB21772." evidence="11" ref="2 4 6">
    <original>E</original>
    <variation>D</variation>
    <location>
        <position position="1081"/>
    </location>
</feature>
<feature type="helix" evidence="18">
    <location>
        <begin position="255"/>
        <end position="264"/>
    </location>
</feature>
<feature type="strand" evidence="19">
    <location>
        <begin position="270"/>
        <end position="276"/>
    </location>
</feature>
<feature type="strand" evidence="19">
    <location>
        <begin position="282"/>
        <end position="288"/>
    </location>
</feature>
<feature type="helix" evidence="19">
    <location>
        <begin position="293"/>
        <end position="304"/>
    </location>
</feature>
<feature type="strand" evidence="19">
    <location>
        <begin position="312"/>
        <end position="318"/>
    </location>
</feature>
<feature type="helix" evidence="19">
    <location>
        <begin position="319"/>
        <end position="321"/>
    </location>
</feature>
<feature type="strand" evidence="19">
    <location>
        <begin position="323"/>
        <end position="326"/>
    </location>
</feature>
<feature type="helix" evidence="19">
    <location>
        <begin position="333"/>
        <end position="337"/>
    </location>
</feature>
<feature type="strand" evidence="19">
    <location>
        <begin position="348"/>
        <end position="352"/>
    </location>
</feature>
<feature type="helix" evidence="19">
    <location>
        <begin position="354"/>
        <end position="356"/>
    </location>
</feature>
<feature type="helix" evidence="19">
    <location>
        <begin position="358"/>
        <end position="361"/>
    </location>
</feature>
<feature type="helix" evidence="19">
    <location>
        <begin position="363"/>
        <end position="365"/>
    </location>
</feature>
<feature type="helix" evidence="19">
    <location>
        <begin position="378"/>
        <end position="389"/>
    </location>
</feature>
<feature type="strand" evidence="19">
    <location>
        <begin position="390"/>
        <end position="393"/>
    </location>
</feature>
<feature type="strand" evidence="19">
    <location>
        <begin position="400"/>
        <end position="406"/>
    </location>
</feature>
<feature type="strand" evidence="19">
    <location>
        <begin position="413"/>
        <end position="421"/>
    </location>
</feature>
<feature type="strand" evidence="19">
    <location>
        <begin position="424"/>
        <end position="427"/>
    </location>
</feature>
<feature type="strand" evidence="19">
    <location>
        <begin position="429"/>
        <end position="433"/>
    </location>
</feature>
<feature type="helix" evidence="19">
    <location>
        <begin position="436"/>
        <end position="438"/>
    </location>
</feature>
<feature type="strand" evidence="19">
    <location>
        <begin position="440"/>
        <end position="443"/>
    </location>
</feature>
<feature type="helix" evidence="18">
    <location>
        <begin position="445"/>
        <end position="447"/>
    </location>
</feature>
<feature type="strand" evidence="19">
    <location>
        <begin position="449"/>
        <end position="455"/>
    </location>
</feature>
<feature type="helix" evidence="19">
    <location>
        <begin position="456"/>
        <end position="459"/>
    </location>
</feature>
<feature type="strand" evidence="19">
    <location>
        <begin position="463"/>
        <end position="465"/>
    </location>
</feature>
<feature type="strand" evidence="19">
    <location>
        <begin position="467"/>
        <end position="471"/>
    </location>
</feature>
<feature type="strand" evidence="19">
    <location>
        <begin position="483"/>
        <end position="486"/>
    </location>
</feature>
<feature type="helix" evidence="19">
    <location>
        <begin position="490"/>
        <end position="505"/>
    </location>
</feature>
<feature type="helix" evidence="19">
    <location>
        <begin position="507"/>
        <end position="516"/>
    </location>
</feature>
<accession>Q70E73</accession>
<accession>Q96Q37</accession>
<accession>Q9C0I2</accession>
<reference key="1">
    <citation type="journal article" date="2001" name="Nat. Genet.">
        <title>A gene encoding a putative GTPase regulator is mutated in familial amyotrophic lateral sclerosis 2.</title>
        <authorList>
            <person name="Hadano S."/>
            <person name="Hand C.K."/>
            <person name="Osuga H."/>
            <person name="Yanagisawa Y."/>
            <person name="Otomo A."/>
            <person name="Devon R.S."/>
            <person name="Miyamoto N."/>
            <person name="Showguchi-Miyata J."/>
            <person name="Okada Y."/>
            <person name="Singaraja R."/>
            <person name="Figlewicz D.A."/>
            <person name="Kwiatkowski T."/>
            <person name="Hosler B.A."/>
            <person name="Sagie T."/>
            <person name="Skaug J."/>
            <person name="Nasir J."/>
            <person name="Brown R.H. Jr."/>
            <person name="Scherer S.W."/>
            <person name="Rouleau G.A."/>
            <person name="Hayden M.R."/>
            <person name="Ikeda J.-E."/>
        </authorList>
    </citation>
    <scope>NUCLEOTIDE SEQUENCE [MRNA] (ISOFORM RMO1AB)</scope>
    <source>
        <tissue>Lymphocyte</tissue>
    </source>
</reference>
<reference key="2">
    <citation type="journal article" date="2004" name="Dev. Cell">
        <title>Lamellipodin, an Ena/VASP ligand, is implicated in the regulation of lamellipodial dynamics.</title>
        <authorList>
            <person name="Krause M."/>
            <person name="Leslie J.D."/>
            <person name="Stewart M."/>
            <person name="Lafuente E.M."/>
            <person name="Valderrama F."/>
            <person name="Jagannathan R."/>
            <person name="Strasser G.A."/>
            <person name="Rubinson D.A."/>
            <person name="Liu H."/>
            <person name="Way M."/>
            <person name="Yaffe M.B."/>
            <person name="Boussiotis V.A."/>
            <person name="Gertler F.B."/>
        </authorList>
    </citation>
    <scope>NUCLEOTIDE SEQUENCE [MRNA] (ISOFORM RMO1-RAPH1)</scope>
    <scope>INTERACTION WITH EVL AND VASP</scope>
    <scope>SUBCELLULAR LOCATION</scope>
    <scope>TISSUE SPECIFICITY</scope>
</reference>
<reference key="3">
    <citation type="journal article" date="2005" name="Int. J. Cancer">
        <title>Altered expression and deletion of RMO1 in osteosarcoma.</title>
        <authorList>
            <person name="Eppert K."/>
            <person name="Wunder J.S."/>
            <person name="Aneliunas V."/>
            <person name="Tsui L.-C."/>
            <person name="Scherer S.W."/>
            <person name="Andrulis I.L."/>
        </authorList>
    </citation>
    <scope>NUCLEOTIDE SEQUENCE [MRNA] (ISOFORMS RMO1AB AND RMO1ABC)</scope>
    <scope>ALTERNATIVE SPLICING</scope>
    <scope>TISSUE SPECIFICITY</scope>
    <source>
        <tissue>Osteosarcoma</tissue>
    </source>
</reference>
<reference key="4">
    <citation type="journal article" date="2005" name="J. Pathol.">
        <title>Systematic identification and molecular characterization of genes differentially expressed in breast and ovarian cancer.</title>
        <authorList>
            <person name="Dahl E."/>
            <person name="Sadr-Nabavi A."/>
            <person name="Klopocki E."/>
            <person name="Betz B."/>
            <person name="Grube S."/>
            <person name="Kreutzfeld R."/>
            <person name="Himmelfarb M."/>
            <person name="An H.-X."/>
            <person name="Gelling S."/>
            <person name="Klaman I."/>
            <person name="Hinzmann B."/>
            <person name="Kristiansen G."/>
            <person name="Gruetzmann R."/>
            <person name="Kuner R."/>
            <person name="Petschke B."/>
            <person name="Rhiem K."/>
            <person name="Wiechen K."/>
            <person name="Sers C."/>
            <person name="Wiestler O."/>
            <person name="Schneider A."/>
            <person name="Hoefler H."/>
            <person name="Naehrig J."/>
            <person name="Dietel M."/>
            <person name="Schaefer R."/>
            <person name="Rosenthal A."/>
            <person name="Schmutzler R."/>
            <person name="Duerst M."/>
            <person name="Meindl A."/>
            <person name="Niederacher D."/>
        </authorList>
    </citation>
    <scope>NUCLEOTIDE SEQUENCE [MRNA] (ISOFORM RMO1-RAPH1)</scope>
</reference>
<reference key="5">
    <citation type="journal article" date="2005" name="Nature">
        <title>Generation and annotation of the DNA sequences of human chromosomes 2 and 4.</title>
        <authorList>
            <person name="Hillier L.W."/>
            <person name="Graves T.A."/>
            <person name="Fulton R.S."/>
            <person name="Fulton L.A."/>
            <person name="Pepin K.H."/>
            <person name="Minx P."/>
            <person name="Wagner-McPherson C."/>
            <person name="Layman D."/>
            <person name="Wylie K."/>
            <person name="Sekhon M."/>
            <person name="Becker M.C."/>
            <person name="Fewell G.A."/>
            <person name="Delehaunty K.D."/>
            <person name="Miner T.L."/>
            <person name="Nash W.E."/>
            <person name="Kremitzki C."/>
            <person name="Oddy L."/>
            <person name="Du H."/>
            <person name="Sun H."/>
            <person name="Bradshaw-Cordum H."/>
            <person name="Ali J."/>
            <person name="Carter J."/>
            <person name="Cordes M."/>
            <person name="Harris A."/>
            <person name="Isak A."/>
            <person name="van Brunt A."/>
            <person name="Nguyen C."/>
            <person name="Du F."/>
            <person name="Courtney L."/>
            <person name="Kalicki J."/>
            <person name="Ozersky P."/>
            <person name="Abbott S."/>
            <person name="Armstrong J."/>
            <person name="Belter E.A."/>
            <person name="Caruso L."/>
            <person name="Cedroni M."/>
            <person name="Cotton M."/>
            <person name="Davidson T."/>
            <person name="Desai A."/>
            <person name="Elliott G."/>
            <person name="Erb T."/>
            <person name="Fronick C."/>
            <person name="Gaige T."/>
            <person name="Haakenson W."/>
            <person name="Haglund K."/>
            <person name="Holmes A."/>
            <person name="Harkins R."/>
            <person name="Kim K."/>
            <person name="Kruchowski S.S."/>
            <person name="Strong C.M."/>
            <person name="Grewal N."/>
            <person name="Goyea E."/>
            <person name="Hou S."/>
            <person name="Levy A."/>
            <person name="Martinka S."/>
            <person name="Mead K."/>
            <person name="McLellan M.D."/>
            <person name="Meyer R."/>
            <person name="Randall-Maher J."/>
            <person name="Tomlinson C."/>
            <person name="Dauphin-Kohlberg S."/>
            <person name="Kozlowicz-Reilly A."/>
            <person name="Shah N."/>
            <person name="Swearengen-Shahid S."/>
            <person name="Snider J."/>
            <person name="Strong J.T."/>
            <person name="Thompson J."/>
            <person name="Yoakum M."/>
            <person name="Leonard S."/>
            <person name="Pearman C."/>
            <person name="Trani L."/>
            <person name="Radionenko M."/>
            <person name="Waligorski J.E."/>
            <person name="Wang C."/>
            <person name="Rock S.M."/>
            <person name="Tin-Wollam A.-M."/>
            <person name="Maupin R."/>
            <person name="Latreille P."/>
            <person name="Wendl M.C."/>
            <person name="Yang S.-P."/>
            <person name="Pohl C."/>
            <person name="Wallis J.W."/>
            <person name="Spieth J."/>
            <person name="Bieri T.A."/>
            <person name="Berkowicz N."/>
            <person name="Nelson J.O."/>
            <person name="Osborne J."/>
            <person name="Ding L."/>
            <person name="Meyer R."/>
            <person name="Sabo A."/>
            <person name="Shotland Y."/>
            <person name="Sinha P."/>
            <person name="Wohldmann P.E."/>
            <person name="Cook L.L."/>
            <person name="Hickenbotham M.T."/>
            <person name="Eldred J."/>
            <person name="Williams D."/>
            <person name="Jones T.A."/>
            <person name="She X."/>
            <person name="Ciccarelli F.D."/>
            <person name="Izaurralde E."/>
            <person name="Taylor J."/>
            <person name="Schmutz J."/>
            <person name="Myers R.M."/>
            <person name="Cox D.R."/>
            <person name="Huang X."/>
            <person name="McPherson J.D."/>
            <person name="Mardis E.R."/>
            <person name="Clifton S.W."/>
            <person name="Warren W.C."/>
            <person name="Chinwalla A.T."/>
            <person name="Eddy S.R."/>
            <person name="Marra M.A."/>
            <person name="Ovcharenko I."/>
            <person name="Furey T.S."/>
            <person name="Miller W."/>
            <person name="Eichler E.E."/>
            <person name="Bork P."/>
            <person name="Suyama M."/>
            <person name="Torrents D."/>
            <person name="Waterston R.H."/>
            <person name="Wilson R.K."/>
        </authorList>
    </citation>
    <scope>NUCLEOTIDE SEQUENCE [LARGE SCALE GENOMIC DNA]</scope>
</reference>
<reference key="6">
    <citation type="journal article" date="2000" name="DNA Res.">
        <title>Prediction of the coding sequences of unidentified human genes. XIX. The complete sequences of 100 new cDNA clones from brain which code for large proteins in vitro.</title>
        <authorList>
            <person name="Nagase T."/>
            <person name="Kikuno R."/>
            <person name="Hattori A."/>
            <person name="Kondo Y."/>
            <person name="Okumura K."/>
            <person name="Ohara O."/>
        </authorList>
    </citation>
    <scope>NUCLEOTIDE SEQUENCE [LARGE SCALE MRNA] OF 15-1250 (ISOFORM RMO1-RAPH1)</scope>
    <source>
        <tissue>Brain</tissue>
    </source>
</reference>
<reference key="7">
    <citation type="journal article" date="2008" name="Proc. Natl. Acad. Sci. U.S.A.">
        <title>A quantitative atlas of mitotic phosphorylation.</title>
        <authorList>
            <person name="Dephoure N."/>
            <person name="Zhou C."/>
            <person name="Villen J."/>
            <person name="Beausoleil S.A."/>
            <person name="Bakalarski C.E."/>
            <person name="Elledge S.J."/>
            <person name="Gygi S.P."/>
        </authorList>
    </citation>
    <scope>PHOSPHORYLATION [LARGE SCALE ANALYSIS] AT SER-54; SER-610; SER-827; THR-830; SER-853; SER-894; SER-965 AND THR-974</scope>
    <scope>IDENTIFICATION BY MASS SPECTROMETRY [LARGE SCALE ANALYSIS]</scope>
    <source>
        <tissue>Cervix carcinoma</tissue>
    </source>
</reference>
<reference key="8">
    <citation type="journal article" date="2009" name="Anal. Chem.">
        <title>Lys-N and trypsin cover complementary parts of the phosphoproteome in a refined SCX-based approach.</title>
        <authorList>
            <person name="Gauci S."/>
            <person name="Helbig A.O."/>
            <person name="Slijper M."/>
            <person name="Krijgsveld J."/>
            <person name="Heck A.J."/>
            <person name="Mohammed S."/>
        </authorList>
    </citation>
    <scope>ACETYLATION [LARGE SCALE ANALYSIS] AT MET-1</scope>
    <scope>IDENTIFICATION BY MASS SPECTROMETRY [LARGE SCALE ANALYSIS]</scope>
</reference>
<reference key="9">
    <citation type="journal article" date="2010" name="Curr. Biol.">
        <title>c-Abl, Lamellipodin, and Ena/VASP proteins cooperate in dorsal ruffling of fibroblasts and axonal morphogenesis.</title>
        <authorList>
            <person name="Michael M."/>
            <person name="Vehlow A."/>
            <person name="Navarro C."/>
            <person name="Krause M."/>
        </authorList>
    </citation>
    <scope>PHOSPHORYLATION AT TYR-426; TYR-456 AND TYR-1226</scope>
</reference>
<reference key="10">
    <citation type="journal article" date="2010" name="Sci. Signal.">
        <title>Quantitative phosphoproteomics reveals widespread full phosphorylation site occupancy during mitosis.</title>
        <authorList>
            <person name="Olsen J.V."/>
            <person name="Vermeulen M."/>
            <person name="Santamaria A."/>
            <person name="Kumar C."/>
            <person name="Miller M.L."/>
            <person name="Jensen L.J."/>
            <person name="Gnad F."/>
            <person name="Cox J."/>
            <person name="Jensen T.S."/>
            <person name="Nigg E.A."/>
            <person name="Brunak S."/>
            <person name="Mann M."/>
        </authorList>
    </citation>
    <scope>ACETYLATION [LARGE SCALE ANALYSIS] AT MET-1</scope>
    <scope>PHOSPHORYLATION [LARGE SCALE ANALYSIS] AT SER-5; SER-17; SER-827; THR-830 AND SER-894</scope>
    <scope>IDENTIFICATION BY MASS SPECTROMETRY [LARGE SCALE ANALYSIS]</scope>
    <source>
        <tissue>Cervix carcinoma</tissue>
    </source>
</reference>
<reference key="11">
    <citation type="journal article" date="2011" name="Sci. Signal.">
        <title>System-wide temporal characterization of the proteome and phosphoproteome of human embryonic stem cell differentiation.</title>
        <authorList>
            <person name="Rigbolt K.T."/>
            <person name="Prokhorova T.A."/>
            <person name="Akimov V."/>
            <person name="Henningsen J."/>
            <person name="Johansen P.T."/>
            <person name="Kratchmarova I."/>
            <person name="Kassem M."/>
            <person name="Mann M."/>
            <person name="Olsen J.V."/>
            <person name="Blagoev B."/>
        </authorList>
    </citation>
    <scope>ACETYLATION [LARGE SCALE ANALYSIS] AT MET-1</scope>
    <scope>PHOSPHORYLATION [LARGE SCALE ANALYSIS] AT SER-5 AND SER-17</scope>
    <scope>IDENTIFICATION BY MASS SPECTROMETRY [LARGE SCALE ANALYSIS]</scope>
</reference>
<reference key="12">
    <citation type="journal article" date="2013" name="J. Proteome Res.">
        <title>Toward a comprehensive characterization of a human cancer cell phosphoproteome.</title>
        <authorList>
            <person name="Zhou H."/>
            <person name="Di Palma S."/>
            <person name="Preisinger C."/>
            <person name="Peng M."/>
            <person name="Polat A.N."/>
            <person name="Heck A.J."/>
            <person name="Mohammed S."/>
        </authorList>
    </citation>
    <scope>PHOSPHORYLATION [LARGE SCALE ANALYSIS] AT SER-54 AND SER-1012</scope>
    <scope>IDENTIFICATION BY MASS SPECTROMETRY [LARGE SCALE ANALYSIS]</scope>
    <source>
        <tissue>Cervix carcinoma</tissue>
    </source>
</reference>
<reference key="13">
    <citation type="journal article" date="2014" name="J. Proteomics">
        <title>An enzyme assisted RP-RPLC approach for in-depth analysis of human liver phosphoproteome.</title>
        <authorList>
            <person name="Bian Y."/>
            <person name="Song C."/>
            <person name="Cheng K."/>
            <person name="Dong M."/>
            <person name="Wang F."/>
            <person name="Huang J."/>
            <person name="Sun D."/>
            <person name="Wang L."/>
            <person name="Ye M."/>
            <person name="Zou H."/>
        </authorList>
    </citation>
    <scope>PHOSPHORYLATION [LARGE SCALE ANALYSIS] AT SER-17; SER-150; SER-192; SER-203; SER-205; SER-845; SER-894; SER-996 AND SER-1183</scope>
    <scope>IDENTIFICATION BY MASS SPECTROMETRY [LARGE SCALE ANALYSIS]</scope>
    <source>
        <tissue>Liver</tissue>
    </source>
</reference>
<reference key="14">
    <citation type="journal article" date="2006" name="Science">
        <title>The consensus coding sequences of human breast and colorectal cancers.</title>
        <authorList>
            <person name="Sjoeblom T."/>
            <person name="Jones S."/>
            <person name="Wood L.D."/>
            <person name="Parsons D.W."/>
            <person name="Lin J."/>
            <person name="Barber T.D."/>
            <person name="Mandelker D."/>
            <person name="Leary R.J."/>
            <person name="Ptak J."/>
            <person name="Silliman N."/>
            <person name="Szabo S."/>
            <person name="Buckhaults P."/>
            <person name="Farrell C."/>
            <person name="Meeh P."/>
            <person name="Markowitz S.D."/>
            <person name="Willis J."/>
            <person name="Dawson D."/>
            <person name="Willson J.K.V."/>
            <person name="Gazdar A.F."/>
            <person name="Hartigan J."/>
            <person name="Wu L."/>
            <person name="Liu C."/>
            <person name="Parmigiani G."/>
            <person name="Park B.H."/>
            <person name="Bachman K.E."/>
            <person name="Papadopoulos N."/>
            <person name="Vogelstein B."/>
            <person name="Kinzler K.W."/>
            <person name="Velculescu V.E."/>
        </authorList>
    </citation>
    <scope>VARIANTS [LARGE SCALE ANALYSIS] SER-891 AND ALA-1228</scope>
</reference>
<reference key="15">
    <citation type="journal article" date="2008" name="Curr. Biol.">
        <title>CED-10/Rac1 mediates axon guidance by regulating the asymmetric distribution of MIG-10/lamellipodin.</title>
        <authorList>
            <person name="Quinn C.C."/>
            <person name="Pfeil D.S."/>
            <person name="Wadsworth W.G."/>
        </authorList>
    </citation>
    <scope>INTERACTION WITH RAC1</scope>
</reference>
<dbReference type="EMBL" id="AB053311">
    <property type="protein sequence ID" value="BAB69020.1"/>
    <property type="molecule type" value="mRNA"/>
</dbReference>
<dbReference type="EMBL" id="AY494951">
    <property type="protein sequence ID" value="AAS82582.1"/>
    <property type="molecule type" value="mRNA"/>
</dbReference>
<dbReference type="EMBL" id="AY523977">
    <property type="protein sequence ID" value="AAS16935.1"/>
    <property type="molecule type" value="mRNA"/>
</dbReference>
<dbReference type="EMBL" id="AY523978">
    <property type="protein sequence ID" value="AAS16936.1"/>
    <property type="molecule type" value="mRNA"/>
</dbReference>
<dbReference type="EMBL" id="AJ584699">
    <property type="protein sequence ID" value="CAE48361.1"/>
    <property type="molecule type" value="mRNA"/>
</dbReference>
<dbReference type="EMBL" id="AC018891">
    <property type="protein sequence ID" value="AAY14676.1"/>
    <property type="molecule type" value="Genomic_DNA"/>
</dbReference>
<dbReference type="EMBL" id="AB051468">
    <property type="protein sequence ID" value="BAB21772.1"/>
    <property type="molecule type" value="mRNA"/>
</dbReference>
<dbReference type="CCDS" id="CCDS2359.1">
    <molecule id="Q70E73-10"/>
</dbReference>
<dbReference type="CCDS" id="CCDS2360.1">
    <molecule id="Q70E73-9"/>
</dbReference>
<dbReference type="RefSeq" id="NP_976241.1">
    <molecule id="Q70E73-9"/>
    <property type="nucleotide sequence ID" value="NM_203365.4"/>
</dbReference>
<dbReference type="RefSeq" id="NP_998754.1">
    <molecule id="Q70E73-10"/>
    <property type="nucleotide sequence ID" value="NM_213589.3"/>
</dbReference>
<dbReference type="RefSeq" id="XP_047301504.1">
    <molecule id="Q70E73-10"/>
    <property type="nucleotide sequence ID" value="XM_047445548.1"/>
</dbReference>
<dbReference type="RefSeq" id="XP_054199418.1">
    <molecule id="Q70E73-10"/>
    <property type="nucleotide sequence ID" value="XM_054343443.1"/>
</dbReference>
<dbReference type="PDB" id="4GMV">
    <property type="method" value="X-ray"/>
    <property type="resolution" value="2.40 A"/>
    <property type="chains" value="A/B=240-520"/>
</dbReference>
<dbReference type="PDB" id="4GN1">
    <property type="method" value="X-ray"/>
    <property type="resolution" value="2.40 A"/>
    <property type="chains" value="A/B/C/D=266-520"/>
</dbReference>
<dbReference type="PDBsum" id="4GMV"/>
<dbReference type="PDBsum" id="4GN1"/>
<dbReference type="SMR" id="Q70E73"/>
<dbReference type="BioGRID" id="122380">
    <property type="interactions" value="65"/>
</dbReference>
<dbReference type="DIP" id="DIP-61336N"/>
<dbReference type="FunCoup" id="Q70E73">
    <property type="interactions" value="1100"/>
</dbReference>
<dbReference type="IntAct" id="Q70E73">
    <property type="interactions" value="27"/>
</dbReference>
<dbReference type="MINT" id="Q70E73"/>
<dbReference type="STRING" id="9606.ENSP00000316543"/>
<dbReference type="GlyConnect" id="2905">
    <property type="glycosylation" value="1 O-GlcNAc glycan (1 site)"/>
</dbReference>
<dbReference type="GlyCosmos" id="Q70E73">
    <property type="glycosylation" value="1 site, 1 glycan"/>
</dbReference>
<dbReference type="GlyGen" id="Q70E73">
    <property type="glycosylation" value="13 sites, 1 O-linked glycan (4 sites)"/>
</dbReference>
<dbReference type="iPTMnet" id="Q70E73"/>
<dbReference type="PhosphoSitePlus" id="Q70E73"/>
<dbReference type="SwissPalm" id="Q70E73"/>
<dbReference type="BioMuta" id="RAPH1"/>
<dbReference type="DMDM" id="215274220"/>
<dbReference type="jPOST" id="Q70E73"/>
<dbReference type="MassIVE" id="Q70E73"/>
<dbReference type="PaxDb" id="9606-ENSP00000316543"/>
<dbReference type="PeptideAtlas" id="Q70E73"/>
<dbReference type="ProteomicsDB" id="68527">
    <molecule id="Q70E73-10"/>
</dbReference>
<dbReference type="ProteomicsDB" id="68528">
    <molecule id="Q70E73-2"/>
</dbReference>
<dbReference type="ProteomicsDB" id="68529">
    <molecule id="Q70E73-3"/>
</dbReference>
<dbReference type="ProteomicsDB" id="68530">
    <molecule id="Q70E73-4"/>
</dbReference>
<dbReference type="ProteomicsDB" id="68531">
    <molecule id="Q70E73-5"/>
</dbReference>
<dbReference type="ProteomicsDB" id="68532">
    <molecule id="Q70E73-6"/>
</dbReference>
<dbReference type="ProteomicsDB" id="68533">
    <molecule id="Q70E73-7"/>
</dbReference>
<dbReference type="ProteomicsDB" id="68534">
    <molecule id="Q70E73-8"/>
</dbReference>
<dbReference type="ProteomicsDB" id="68535">
    <molecule id="Q70E73-9"/>
</dbReference>
<dbReference type="Pumba" id="Q70E73"/>
<dbReference type="Antibodypedia" id="19956">
    <property type="antibodies" value="77 antibodies from 25 providers"/>
</dbReference>
<dbReference type="DNASU" id="65059"/>
<dbReference type="Ensembl" id="ENST00000308091.8">
    <molecule id="Q70E73-9"/>
    <property type="protein sequence ID" value="ENSP00000311293.4"/>
    <property type="gene ID" value="ENSG00000173166.18"/>
</dbReference>
<dbReference type="Ensembl" id="ENST00000319170.10">
    <molecule id="Q70E73-10"/>
    <property type="protein sequence ID" value="ENSP00000316543.5"/>
    <property type="gene ID" value="ENSG00000173166.18"/>
</dbReference>
<dbReference type="Ensembl" id="ENST00000418114.5">
    <molecule id="Q70E73-2"/>
    <property type="protein sequence ID" value="ENSP00000396711.1"/>
    <property type="gene ID" value="ENSG00000173166.18"/>
</dbReference>
<dbReference type="Ensembl" id="ENST00000419464.5">
    <molecule id="Q70E73-5"/>
    <property type="protein sequence ID" value="ENSP00000390578.1"/>
    <property type="gene ID" value="ENSG00000173166.18"/>
</dbReference>
<dbReference type="Ensembl" id="ENST00000423104.5">
    <molecule id="Q70E73-7"/>
    <property type="protein sequence ID" value="ENSP00000397751.1"/>
    <property type="gene ID" value="ENSG00000173166.18"/>
</dbReference>
<dbReference type="Ensembl" id="ENST00000439222.5">
    <molecule id="Q70E73-8"/>
    <property type="protein sequence ID" value="ENSP00000411138.1"/>
    <property type="gene ID" value="ENSG00000173166.18"/>
</dbReference>
<dbReference type="Ensembl" id="ENST00000453034.5">
    <molecule id="Q70E73-6"/>
    <property type="protein sequence ID" value="ENSP00000406662.1"/>
    <property type="gene ID" value="ENSG00000173166.18"/>
</dbReference>
<dbReference type="GeneID" id="65059"/>
<dbReference type="KEGG" id="hsa:65059"/>
<dbReference type="MANE-Select" id="ENST00000319170.10">
    <property type="protein sequence ID" value="ENSP00000316543.5"/>
    <property type="RefSeq nucleotide sequence ID" value="NM_213589.3"/>
    <property type="RefSeq protein sequence ID" value="NP_998754.1"/>
</dbReference>
<dbReference type="UCSC" id="uc002vad.5">
    <molecule id="Q70E73-10"/>
    <property type="organism name" value="human"/>
</dbReference>
<dbReference type="AGR" id="HGNC:14436"/>
<dbReference type="CTD" id="65059"/>
<dbReference type="DisGeNET" id="65059"/>
<dbReference type="GeneCards" id="RAPH1"/>
<dbReference type="HGNC" id="HGNC:14436">
    <property type="gene designation" value="RAPH1"/>
</dbReference>
<dbReference type="HPA" id="ENSG00000173166">
    <property type="expression patterns" value="Tissue enhanced (liver)"/>
</dbReference>
<dbReference type="MIM" id="609035">
    <property type="type" value="gene"/>
</dbReference>
<dbReference type="neXtProt" id="NX_Q70E73"/>
<dbReference type="OpenTargets" id="ENSG00000173166"/>
<dbReference type="PharmGKB" id="PA24749"/>
<dbReference type="VEuPathDB" id="HostDB:ENSG00000173166"/>
<dbReference type="eggNOG" id="KOG3751">
    <property type="taxonomic scope" value="Eukaryota"/>
</dbReference>
<dbReference type="GeneTree" id="ENSGT00940000156552"/>
<dbReference type="HOGENOM" id="CLU_022700_0_0_1"/>
<dbReference type="InParanoid" id="Q70E73"/>
<dbReference type="OMA" id="PTFVKYS"/>
<dbReference type="OrthoDB" id="6235964at2759"/>
<dbReference type="PAN-GO" id="Q70E73">
    <property type="GO annotations" value="2 GO annotations based on evolutionary models"/>
</dbReference>
<dbReference type="PhylomeDB" id="Q70E73"/>
<dbReference type="TreeFam" id="TF317511"/>
<dbReference type="PathwayCommons" id="Q70E73"/>
<dbReference type="SignaLink" id="Q70E73"/>
<dbReference type="SIGNOR" id="Q70E73"/>
<dbReference type="BioGRID-ORCS" id="65059">
    <property type="hits" value="20 hits in 1151 CRISPR screens"/>
</dbReference>
<dbReference type="CD-CODE" id="FB4E32DD">
    <property type="entry name" value="Presynaptic clusters and postsynaptic densities"/>
</dbReference>
<dbReference type="ChiTaRS" id="RAPH1">
    <property type="organism name" value="human"/>
</dbReference>
<dbReference type="EvolutionaryTrace" id="Q70E73"/>
<dbReference type="GeneWiki" id="RAPH1"/>
<dbReference type="GenomeRNAi" id="65059"/>
<dbReference type="Pharos" id="Q70E73">
    <property type="development level" value="Tbio"/>
</dbReference>
<dbReference type="PRO" id="PR:Q70E73"/>
<dbReference type="Proteomes" id="UP000005640">
    <property type="component" value="Chromosome 2"/>
</dbReference>
<dbReference type="RNAct" id="Q70E73">
    <property type="molecule type" value="protein"/>
</dbReference>
<dbReference type="Bgee" id="ENSG00000173166">
    <property type="expression patterns" value="Expressed in epithelial cell of pancreas and 195 other cell types or tissues"/>
</dbReference>
<dbReference type="ExpressionAtlas" id="Q70E73">
    <property type="expression patterns" value="baseline and differential"/>
</dbReference>
<dbReference type="GO" id="GO:0005856">
    <property type="term" value="C:cytoskeleton"/>
    <property type="evidence" value="ECO:0007669"/>
    <property type="project" value="UniProtKB-SubCell"/>
</dbReference>
<dbReference type="GO" id="GO:0005829">
    <property type="term" value="C:cytosol"/>
    <property type="evidence" value="ECO:0000314"/>
    <property type="project" value="HPA"/>
</dbReference>
<dbReference type="GO" id="GO:0030175">
    <property type="term" value="C:filopodium"/>
    <property type="evidence" value="ECO:0007669"/>
    <property type="project" value="UniProtKB-SubCell"/>
</dbReference>
<dbReference type="GO" id="GO:0030027">
    <property type="term" value="C:lamellipodium"/>
    <property type="evidence" value="ECO:0007669"/>
    <property type="project" value="UniProtKB-SubCell"/>
</dbReference>
<dbReference type="GO" id="GO:0016604">
    <property type="term" value="C:nuclear body"/>
    <property type="evidence" value="ECO:0000314"/>
    <property type="project" value="HPA"/>
</dbReference>
<dbReference type="GO" id="GO:0005886">
    <property type="term" value="C:plasma membrane"/>
    <property type="evidence" value="ECO:0000314"/>
    <property type="project" value="HPA"/>
</dbReference>
<dbReference type="GO" id="GO:0048675">
    <property type="term" value="P:axon extension"/>
    <property type="evidence" value="ECO:0007669"/>
    <property type="project" value="Ensembl"/>
</dbReference>
<dbReference type="GO" id="GO:0007165">
    <property type="term" value="P:signal transduction"/>
    <property type="evidence" value="ECO:0007669"/>
    <property type="project" value="InterPro"/>
</dbReference>
<dbReference type="CDD" id="cd01259">
    <property type="entry name" value="PH_APBB1IP"/>
    <property type="match status" value="1"/>
</dbReference>
<dbReference type="CDD" id="cd16136">
    <property type="entry name" value="RA_MRL_Lpd"/>
    <property type="match status" value="1"/>
</dbReference>
<dbReference type="FunFam" id="2.30.29.30:FF:000048">
    <property type="entry name" value="Ras association (RalGDS/AF-6) and pleckstrin homology domains 1"/>
    <property type="match status" value="1"/>
</dbReference>
<dbReference type="FunFam" id="3.10.20.90:FF:000027">
    <property type="entry name" value="Ras association (RalGDS/AF-6) and pleckstrin homology domains 1"/>
    <property type="match status" value="1"/>
</dbReference>
<dbReference type="Gene3D" id="3.10.20.90">
    <property type="entry name" value="Phosphatidylinositol 3-kinase Catalytic Subunit, Chain A, domain 1"/>
    <property type="match status" value="1"/>
</dbReference>
<dbReference type="Gene3D" id="2.30.29.30">
    <property type="entry name" value="Pleckstrin-homology domain (PH domain)/Phosphotyrosine-binding domain (PTB)"/>
    <property type="match status" value="1"/>
</dbReference>
<dbReference type="InterPro" id="IPR039664">
    <property type="entry name" value="GRB/APBB1IP"/>
</dbReference>
<dbReference type="InterPro" id="IPR011993">
    <property type="entry name" value="PH-like_dom_sf"/>
</dbReference>
<dbReference type="InterPro" id="IPR039665">
    <property type="entry name" value="PH_APBB1IP"/>
</dbReference>
<dbReference type="InterPro" id="IPR001849">
    <property type="entry name" value="PH_domain"/>
</dbReference>
<dbReference type="InterPro" id="IPR000159">
    <property type="entry name" value="RA_dom"/>
</dbReference>
<dbReference type="InterPro" id="IPR029071">
    <property type="entry name" value="Ubiquitin-like_domsf"/>
</dbReference>
<dbReference type="PANTHER" id="PTHR11243">
    <property type="entry name" value="GROWTH FACTOR RECEPTOR-BOUND PROTEIN"/>
    <property type="match status" value="1"/>
</dbReference>
<dbReference type="PANTHER" id="PTHR11243:SF15">
    <property type="entry name" value="RAS-ASSOCIATED AND PLECKSTRIN HOMOLOGY DOMAINS-CONTAINING PROTEIN 1"/>
    <property type="match status" value="1"/>
</dbReference>
<dbReference type="Pfam" id="PF00169">
    <property type="entry name" value="PH"/>
    <property type="match status" value="1"/>
</dbReference>
<dbReference type="Pfam" id="PF21989">
    <property type="entry name" value="RA_2"/>
    <property type="match status" value="1"/>
</dbReference>
<dbReference type="PRINTS" id="PR00832">
    <property type="entry name" value="PAXILLIN"/>
</dbReference>
<dbReference type="SMART" id="SM00233">
    <property type="entry name" value="PH"/>
    <property type="match status" value="1"/>
</dbReference>
<dbReference type="SMART" id="SM00314">
    <property type="entry name" value="RA"/>
    <property type="match status" value="1"/>
</dbReference>
<dbReference type="SUPFAM" id="SSF50729">
    <property type="entry name" value="PH domain-like"/>
    <property type="match status" value="1"/>
</dbReference>
<dbReference type="SUPFAM" id="SSF54236">
    <property type="entry name" value="Ubiquitin-like"/>
    <property type="match status" value="1"/>
</dbReference>
<dbReference type="PROSITE" id="PS50003">
    <property type="entry name" value="PH_DOMAIN"/>
    <property type="match status" value="1"/>
</dbReference>
<dbReference type="PROSITE" id="PS50200">
    <property type="entry name" value="RA"/>
    <property type="match status" value="1"/>
</dbReference>
<name>RAPH1_HUMAN</name>
<protein>
    <recommendedName>
        <fullName>Ras-associated and pleckstrin homology domains-containing protein 1</fullName>
        <shortName>RAPH1</shortName>
    </recommendedName>
    <alternativeName>
        <fullName>Amyotrophic lateral sclerosis 2 chromosomal region candidate gene 18 protein</fullName>
    </alternativeName>
    <alternativeName>
        <fullName>Amyotrophic lateral sclerosis 2 chromosomal region candidate gene 9 protein</fullName>
    </alternativeName>
    <alternativeName>
        <fullName>Lamellipodin</fullName>
    </alternativeName>
    <alternativeName>
        <fullName>Proline-rich EVH1 ligand 2</fullName>
        <shortName>PREL-2</shortName>
    </alternativeName>
    <alternativeName>
        <fullName>Protein RMO1</fullName>
    </alternativeName>
</protein>
<proteinExistence type="evidence at protein level"/>
<keyword id="KW-0002">3D-structure</keyword>
<keyword id="KW-0007">Acetylation</keyword>
<keyword id="KW-0025">Alternative splicing</keyword>
<keyword id="KW-1003">Cell membrane</keyword>
<keyword id="KW-0966">Cell projection</keyword>
<keyword id="KW-0963">Cytoplasm</keyword>
<keyword id="KW-0206">Cytoskeleton</keyword>
<keyword id="KW-0472">Membrane</keyword>
<keyword id="KW-0597">Phosphoprotein</keyword>
<keyword id="KW-1267">Proteomics identification</keyword>
<keyword id="KW-1185">Reference proteome</keyword>